<sequence length="578" mass="66767">MGEIERPRSLSRITVHSDAEYLDAYDHVTYSNSLELLDTIAETQITLNLFMNNKFELAEERMAELYDKSMYHSMGYTCILFIKAVMTVNKQDMEKAAEASKLSCEIIEKFRERRSIKETIFGASAKGKKMTDEELHAELCYAQSLLIRAMLTFFHDDNFASFIKGALNIRTCYQTYRYCEKLMNEPSVWVGRNKKVQEQFESGTRMGLGTFSLMLSVLPSKVLRLLEVVGFSGDKVAGMRDLHHVASMTGTLCSPLAKMVLLTWHLIISFVLGTGQPDLEVCKRLMPGLTHLWPRGAIMLFMKARLLLISGDIEAAIHYFNMSIESQDVYKQFHHGCYWELLFAHGYQRRWSHSANYARLLMKESKWSRCVYTYLLCIFFAADETVEEGRRNETINALAGKVDGLRIRIAGKSIPVEKYCGRKAKRFTTTNSLLFAHYEFIYFWNGFDIFGKNSKMVRGIVEDMDRVWEMKKSTCDIDDYCLYYFLKGVALRHLSLHAQAEECFKIVLERESSIKSFTYLPPNATYELAMLRISEQQFMEAQTLLDKARAYKSYSLENKLHFRIHSAMGTMGCRTPMM</sequence>
<dbReference type="EMBL" id="FO080708">
    <property type="protein sequence ID" value="CCD66032.1"/>
    <property type="molecule type" value="Genomic_DNA"/>
</dbReference>
<dbReference type="PIR" id="T15736">
    <property type="entry name" value="T15736"/>
</dbReference>
<dbReference type="FunCoup" id="Q09266">
    <property type="interactions" value="298"/>
</dbReference>
<dbReference type="STRING" id="6239.C32D5.6.1"/>
<dbReference type="PaxDb" id="6239-C32D5.6"/>
<dbReference type="EnsemblMetazoa" id="C32D5.6.1">
    <property type="protein sequence ID" value="C32D5.6.1"/>
    <property type="gene ID" value="WBGene00016314"/>
</dbReference>
<dbReference type="KEGG" id="cel:CELE_C32D5.6"/>
<dbReference type="UCSC" id="C32D5.6">
    <property type="organism name" value="c. elegans"/>
</dbReference>
<dbReference type="AGR" id="WB:WBGene00016314"/>
<dbReference type="CTD" id="174046"/>
<dbReference type="WormBase" id="C32D5.6">
    <property type="protein sequence ID" value="CE01846"/>
    <property type="gene ID" value="WBGene00016314"/>
    <property type="gene designation" value="ttc-39B"/>
</dbReference>
<dbReference type="eggNOG" id="KOG3783">
    <property type="taxonomic scope" value="Eukaryota"/>
</dbReference>
<dbReference type="GeneTree" id="ENSGT00950000182917"/>
<dbReference type="HOGENOM" id="CLU_010086_3_0_1"/>
<dbReference type="InParanoid" id="Q09266"/>
<dbReference type="OMA" id="ELMWAHC"/>
<dbReference type="OrthoDB" id="43460at2759"/>
<dbReference type="PhylomeDB" id="Q09266"/>
<dbReference type="PRO" id="PR:Q09266"/>
<dbReference type="Proteomes" id="UP000001940">
    <property type="component" value="Chromosome II"/>
</dbReference>
<dbReference type="Bgee" id="WBGene00016314">
    <property type="expression patterns" value="Expressed in material anatomical entity and 4 other cell types or tissues"/>
</dbReference>
<dbReference type="Gene3D" id="1.25.40.10">
    <property type="entry name" value="Tetratricopeptide repeat domain"/>
    <property type="match status" value="1"/>
</dbReference>
<dbReference type="InterPro" id="IPR019412">
    <property type="entry name" value="Iml2/TPR_39"/>
</dbReference>
<dbReference type="InterPro" id="IPR011990">
    <property type="entry name" value="TPR-like_helical_dom_sf"/>
</dbReference>
<dbReference type="InterPro" id="IPR019734">
    <property type="entry name" value="TPR_rpt"/>
</dbReference>
<dbReference type="PANTHER" id="PTHR31859">
    <property type="entry name" value="TETRATRICOPEPTIDE REPEAT PROTEIN 39 FAMILY MEMBER"/>
    <property type="match status" value="1"/>
</dbReference>
<dbReference type="PANTHER" id="PTHR31859:SF9">
    <property type="entry name" value="TETRATRICOPEPTIDE REPEAT PROTEIN 39B"/>
    <property type="match status" value="1"/>
</dbReference>
<dbReference type="Pfam" id="PF10300">
    <property type="entry name" value="Iml2-TPR_39"/>
    <property type="match status" value="1"/>
</dbReference>
<dbReference type="SMART" id="SM00028">
    <property type="entry name" value="TPR"/>
    <property type="match status" value="2"/>
</dbReference>
<dbReference type="SUPFAM" id="SSF81901">
    <property type="entry name" value="HCP-like"/>
    <property type="match status" value="1"/>
</dbReference>
<dbReference type="SUPFAM" id="SSF48452">
    <property type="entry name" value="TPR-like"/>
    <property type="match status" value="1"/>
</dbReference>
<feature type="chain" id="PRO_0000065218" description="Tetratricopeptide repeat protein ttc-39B">
    <location>
        <begin position="1"/>
        <end position="578"/>
    </location>
</feature>
<feature type="repeat" description="TPR 1" evidence="1">
    <location>
        <begin position="297"/>
        <end position="330"/>
    </location>
</feature>
<feature type="repeat" description="TPR 2" evidence="1">
    <location>
        <begin position="481"/>
        <end position="514"/>
    </location>
</feature>
<feature type="repeat" description="TPR 3" evidence="1">
    <location>
        <begin position="522"/>
        <end position="554"/>
    </location>
</feature>
<evidence type="ECO:0000250" key="1">
    <source>
        <dbReference type="UniProtKB" id="Q8BYY4"/>
    </source>
</evidence>
<evidence type="ECO:0000312" key="2">
    <source>
        <dbReference type="WormBase" id="C32D5.6"/>
    </source>
</evidence>
<organism>
    <name type="scientific">Caenorhabditis elegans</name>
    <dbReference type="NCBI Taxonomy" id="6239"/>
    <lineage>
        <taxon>Eukaryota</taxon>
        <taxon>Metazoa</taxon>
        <taxon>Ecdysozoa</taxon>
        <taxon>Nematoda</taxon>
        <taxon>Chromadorea</taxon>
        <taxon>Rhabditida</taxon>
        <taxon>Rhabditina</taxon>
        <taxon>Rhabditomorpha</taxon>
        <taxon>Rhabditoidea</taxon>
        <taxon>Rhabditidae</taxon>
        <taxon>Peloderinae</taxon>
        <taxon>Caenorhabditis</taxon>
    </lineage>
</organism>
<proteinExistence type="predicted"/>
<gene>
    <name evidence="2" type="primary">ttc-39B</name>
    <name evidence="2" type="ORF">C32D5.6</name>
</gene>
<keyword id="KW-1185">Reference proteome</keyword>
<keyword id="KW-0677">Repeat</keyword>
<keyword id="KW-0802">TPR repeat</keyword>
<accession>Q09266</accession>
<protein>
    <recommendedName>
        <fullName evidence="1">Tetratricopeptide repeat protein ttc-39B</fullName>
    </recommendedName>
    <alternativeName>
        <fullName evidence="2">Tetratricopeptide repeat domain protein related</fullName>
    </alternativeName>
</protein>
<reference key="1">
    <citation type="journal article" date="1998" name="Science">
        <title>Genome sequence of the nematode C. elegans: a platform for investigating biology.</title>
        <authorList>
            <consortium name="The C. elegans sequencing consortium"/>
        </authorList>
    </citation>
    <scope>NUCLEOTIDE SEQUENCE [LARGE SCALE GENOMIC DNA]</scope>
    <source>
        <strain>Bristol N2</strain>
    </source>
</reference>
<name>TT39_CAEEL</name>